<name>UBID_PSEP7</name>
<gene>
    <name evidence="1" type="primary">ubiD</name>
    <name type="ordered locus">PSPA7_5980</name>
</gene>
<feature type="chain" id="PRO_1000069852" description="3-octaprenyl-4-hydroxybenzoate carboxy-lyase">
    <location>
        <begin position="1"/>
        <end position="488"/>
    </location>
</feature>
<feature type="active site" description="Proton donor" evidence="1">
    <location>
        <position position="287"/>
    </location>
</feature>
<feature type="binding site" evidence="1">
    <location>
        <position position="172"/>
    </location>
    <ligand>
        <name>Mn(2+)</name>
        <dbReference type="ChEBI" id="CHEBI:29035"/>
    </ligand>
</feature>
<feature type="binding site" evidence="1">
    <location>
        <begin position="175"/>
        <end position="177"/>
    </location>
    <ligand>
        <name>prenylated FMN</name>
        <dbReference type="ChEBI" id="CHEBI:87746"/>
    </ligand>
</feature>
<feature type="binding site" evidence="1">
    <location>
        <begin position="189"/>
        <end position="191"/>
    </location>
    <ligand>
        <name>prenylated FMN</name>
        <dbReference type="ChEBI" id="CHEBI:87746"/>
    </ligand>
</feature>
<feature type="binding site" evidence="1">
    <location>
        <begin position="194"/>
        <end position="195"/>
    </location>
    <ligand>
        <name>prenylated FMN</name>
        <dbReference type="ChEBI" id="CHEBI:87746"/>
    </ligand>
</feature>
<feature type="binding site" evidence="1">
    <location>
        <position position="238"/>
    </location>
    <ligand>
        <name>Mn(2+)</name>
        <dbReference type="ChEBI" id="CHEBI:29035"/>
    </ligand>
</feature>
<sequence>MTFKDLRDFIAQLEQRGALKRIQVPISPVLEMTEVCDRTLRAKGPALLFEKPTGFDMPVLGNLFGTPERVALGMGAEDVGALREIGTLLAQLKEPEPPKGFKDAWAKLPMYRKVLSMAPKVLKDAPCQEVVEEGDDVDLGRLPVQTCWPGDVGPLITWGLTVTRGPNKERQNLGIYRQQVIGRNKVIMRWLSHRGGALDYREWCQKHPGQPYPVAVALGADPATILGAVTPVPDTLSEYAFAGLLRGHRTELVKCRGSDLQVPASAEIVLEGVIHPGEMADEGPYGDHTGYYNEVDRFPVFTVERVTRRQKPIYHSTYTGRPPDEPAILGVALNEVFVPILQKQFPEIVDFYLPPEGCSYRMAVVTMKKQYPGHAKRVMLGVWSFLRQFMYTKFVIVTDDDIDARDWNDVIWAITTRMDPKRDTVMIDNTPIDYLDFASPVSGLGSKMGLDATHKWPGETSREWGRAIVKDEAVTRRIDELWSSLGID</sequence>
<protein>
    <recommendedName>
        <fullName evidence="1">3-octaprenyl-4-hydroxybenzoate carboxy-lyase</fullName>
        <ecNumber evidence="1">4.1.1.98</ecNumber>
    </recommendedName>
    <alternativeName>
        <fullName evidence="1">Polyprenyl p-hydroxybenzoate decarboxylase</fullName>
    </alternativeName>
</protein>
<organism>
    <name type="scientific">Pseudomonas paraeruginosa (strain DSM 24068 / PA7)</name>
    <name type="common">Pseudomonas aeruginosa (strain PA7)</name>
    <dbReference type="NCBI Taxonomy" id="381754"/>
    <lineage>
        <taxon>Bacteria</taxon>
        <taxon>Pseudomonadati</taxon>
        <taxon>Pseudomonadota</taxon>
        <taxon>Gammaproteobacteria</taxon>
        <taxon>Pseudomonadales</taxon>
        <taxon>Pseudomonadaceae</taxon>
        <taxon>Pseudomonas</taxon>
        <taxon>Pseudomonas paraeruginosa</taxon>
    </lineage>
</organism>
<accession>A6VE11</accession>
<reference key="1">
    <citation type="submission" date="2007-06" db="EMBL/GenBank/DDBJ databases">
        <authorList>
            <person name="Dodson R.J."/>
            <person name="Harkins D."/>
            <person name="Paulsen I.T."/>
        </authorList>
    </citation>
    <scope>NUCLEOTIDE SEQUENCE [LARGE SCALE GENOMIC DNA]</scope>
    <source>
        <strain>DSM 24068 / PA7</strain>
    </source>
</reference>
<keyword id="KW-1003">Cell membrane</keyword>
<keyword id="KW-0210">Decarboxylase</keyword>
<keyword id="KW-0285">Flavoprotein</keyword>
<keyword id="KW-0288">FMN</keyword>
<keyword id="KW-0456">Lyase</keyword>
<keyword id="KW-0464">Manganese</keyword>
<keyword id="KW-0472">Membrane</keyword>
<keyword id="KW-0479">Metal-binding</keyword>
<keyword id="KW-0831">Ubiquinone biosynthesis</keyword>
<evidence type="ECO:0000255" key="1">
    <source>
        <dbReference type="HAMAP-Rule" id="MF_01636"/>
    </source>
</evidence>
<dbReference type="EC" id="4.1.1.98" evidence="1"/>
<dbReference type="EMBL" id="CP000744">
    <property type="protein sequence ID" value="ABR86233.1"/>
    <property type="molecule type" value="Genomic_DNA"/>
</dbReference>
<dbReference type="RefSeq" id="WP_003150175.1">
    <property type="nucleotide sequence ID" value="NC_009656.1"/>
</dbReference>
<dbReference type="SMR" id="A6VE11"/>
<dbReference type="KEGG" id="pap:PSPA7_5980"/>
<dbReference type="HOGENOM" id="CLU_023348_4_1_6"/>
<dbReference type="UniPathway" id="UPA00232"/>
<dbReference type="Proteomes" id="UP000001582">
    <property type="component" value="Chromosome"/>
</dbReference>
<dbReference type="GO" id="GO:0005829">
    <property type="term" value="C:cytosol"/>
    <property type="evidence" value="ECO:0007669"/>
    <property type="project" value="TreeGrafter"/>
</dbReference>
<dbReference type="GO" id="GO:0005886">
    <property type="term" value="C:plasma membrane"/>
    <property type="evidence" value="ECO:0007669"/>
    <property type="project" value="UniProtKB-SubCell"/>
</dbReference>
<dbReference type="GO" id="GO:0008694">
    <property type="term" value="F:3-octaprenyl-4-hydroxybenzoate carboxy-lyase activity"/>
    <property type="evidence" value="ECO:0007669"/>
    <property type="project" value="UniProtKB-UniRule"/>
</dbReference>
<dbReference type="GO" id="GO:0046872">
    <property type="term" value="F:metal ion binding"/>
    <property type="evidence" value="ECO:0007669"/>
    <property type="project" value="UniProtKB-KW"/>
</dbReference>
<dbReference type="GO" id="GO:0006744">
    <property type="term" value="P:ubiquinone biosynthetic process"/>
    <property type="evidence" value="ECO:0007669"/>
    <property type="project" value="UniProtKB-UniRule"/>
</dbReference>
<dbReference type="FunFam" id="1.20.5.570:FF:000001">
    <property type="entry name" value="3-octaprenyl-4-hydroxybenzoate carboxy-lyase"/>
    <property type="match status" value="1"/>
</dbReference>
<dbReference type="FunFam" id="3.40.1670.10:FF:000001">
    <property type="entry name" value="3-octaprenyl-4-hydroxybenzoate carboxy-lyase"/>
    <property type="match status" value="1"/>
</dbReference>
<dbReference type="Gene3D" id="1.20.5.570">
    <property type="entry name" value="Single helix bin"/>
    <property type="match status" value="1"/>
</dbReference>
<dbReference type="Gene3D" id="3.40.1670.10">
    <property type="entry name" value="UbiD C-terminal domain-like"/>
    <property type="match status" value="1"/>
</dbReference>
<dbReference type="HAMAP" id="MF_01636">
    <property type="entry name" value="UbiD"/>
    <property type="match status" value="1"/>
</dbReference>
<dbReference type="InterPro" id="IPR002830">
    <property type="entry name" value="UbiD"/>
</dbReference>
<dbReference type="InterPro" id="IPR049381">
    <property type="entry name" value="UbiD-like_C"/>
</dbReference>
<dbReference type="InterPro" id="IPR049383">
    <property type="entry name" value="UbiD-like_N"/>
</dbReference>
<dbReference type="InterPro" id="IPR023677">
    <property type="entry name" value="UbiD_bacteria"/>
</dbReference>
<dbReference type="InterPro" id="IPR048304">
    <property type="entry name" value="UbiD_Rift_dom"/>
</dbReference>
<dbReference type="NCBIfam" id="NF008175">
    <property type="entry name" value="PRK10922.1"/>
    <property type="match status" value="1"/>
</dbReference>
<dbReference type="NCBIfam" id="TIGR00148">
    <property type="entry name" value="UbiD family decarboxylase"/>
    <property type="match status" value="1"/>
</dbReference>
<dbReference type="PANTHER" id="PTHR30108">
    <property type="entry name" value="3-OCTAPRENYL-4-HYDROXYBENZOATE CARBOXY-LYASE-RELATED"/>
    <property type="match status" value="1"/>
</dbReference>
<dbReference type="PANTHER" id="PTHR30108:SF17">
    <property type="entry name" value="FERULIC ACID DECARBOXYLASE 1"/>
    <property type="match status" value="1"/>
</dbReference>
<dbReference type="Pfam" id="PF01977">
    <property type="entry name" value="UbiD"/>
    <property type="match status" value="1"/>
</dbReference>
<dbReference type="Pfam" id="PF20696">
    <property type="entry name" value="UbiD_C"/>
    <property type="match status" value="1"/>
</dbReference>
<dbReference type="Pfam" id="PF20695">
    <property type="entry name" value="UbiD_N"/>
    <property type="match status" value="1"/>
</dbReference>
<dbReference type="SUPFAM" id="SSF50475">
    <property type="entry name" value="FMN-binding split barrel"/>
    <property type="match status" value="1"/>
</dbReference>
<dbReference type="SUPFAM" id="SSF143968">
    <property type="entry name" value="UbiD C-terminal domain-like"/>
    <property type="match status" value="1"/>
</dbReference>
<proteinExistence type="inferred from homology"/>
<comment type="function">
    <text evidence="1">Catalyzes the decarboxylation of 3-octaprenyl-4-hydroxy benzoate to 2-octaprenylphenol, an intermediate step in ubiquinone biosynthesis.</text>
</comment>
<comment type="catalytic activity">
    <reaction evidence="1">
        <text>a 4-hydroxy-3-(all-trans-polyprenyl)benzoate + H(+) = a 2-(all-trans-polyprenyl)phenol + CO2</text>
        <dbReference type="Rhea" id="RHEA:41680"/>
        <dbReference type="Rhea" id="RHEA-COMP:9514"/>
        <dbReference type="Rhea" id="RHEA-COMP:9516"/>
        <dbReference type="ChEBI" id="CHEBI:1269"/>
        <dbReference type="ChEBI" id="CHEBI:15378"/>
        <dbReference type="ChEBI" id="CHEBI:16526"/>
        <dbReference type="ChEBI" id="CHEBI:78396"/>
        <dbReference type="EC" id="4.1.1.98"/>
    </reaction>
</comment>
<comment type="cofactor">
    <cofactor evidence="1">
        <name>prenylated FMN</name>
        <dbReference type="ChEBI" id="CHEBI:87746"/>
    </cofactor>
    <text evidence="1">Binds 1 prenylated FMN per subunit.</text>
</comment>
<comment type="cofactor">
    <cofactor evidence="1">
        <name>Mn(2+)</name>
        <dbReference type="ChEBI" id="CHEBI:29035"/>
    </cofactor>
</comment>
<comment type="pathway">
    <text evidence="1">Cofactor biosynthesis; ubiquinone biosynthesis.</text>
</comment>
<comment type="subunit">
    <text evidence="1">Homohexamer.</text>
</comment>
<comment type="subcellular location">
    <subcellularLocation>
        <location evidence="1">Cell membrane</location>
        <topology evidence="1">Peripheral membrane protein</topology>
    </subcellularLocation>
</comment>
<comment type="similarity">
    <text evidence="1">Belongs to the UbiD family.</text>
</comment>